<proteinExistence type="inferred from homology"/>
<comment type="function">
    <text evidence="1">Catalyzes the hydrolysis of the amide bond of N(2)-acetylated L-amino acids. Cleaves the acetyl group from N-acetyl-L-ornithine to form L-ornithine, an intermediate in L-arginine biosynthesis pathway, and a branchpoint in the synthesis of polyamines.</text>
</comment>
<comment type="catalytic activity">
    <reaction evidence="1">
        <text>N(2)-acetyl-L-ornithine + H2O = L-ornithine + acetate</text>
        <dbReference type="Rhea" id="RHEA:15941"/>
        <dbReference type="ChEBI" id="CHEBI:15377"/>
        <dbReference type="ChEBI" id="CHEBI:30089"/>
        <dbReference type="ChEBI" id="CHEBI:46911"/>
        <dbReference type="ChEBI" id="CHEBI:57805"/>
        <dbReference type="EC" id="3.5.1.16"/>
    </reaction>
</comment>
<comment type="cofactor">
    <cofactor evidence="1">
        <name>Zn(2+)</name>
        <dbReference type="ChEBI" id="CHEBI:29105"/>
    </cofactor>
    <cofactor evidence="1">
        <name>Co(2+)</name>
        <dbReference type="ChEBI" id="CHEBI:48828"/>
    </cofactor>
    <text evidence="1">Binds 2 Zn(2+) or Co(2+) ions per subunit.</text>
</comment>
<comment type="cofactor">
    <cofactor evidence="1">
        <name>glutathione</name>
        <dbReference type="ChEBI" id="CHEBI:57925"/>
    </cofactor>
</comment>
<comment type="pathway">
    <text evidence="1">Amino-acid biosynthesis; L-arginine biosynthesis; L-ornithine from N(2)-acetyl-L-ornithine (linear): step 1/1.</text>
</comment>
<comment type="subunit">
    <text evidence="1">Homodimer.</text>
</comment>
<comment type="subcellular location">
    <subcellularLocation>
        <location evidence="1">Cytoplasm</location>
    </subcellularLocation>
</comment>
<comment type="similarity">
    <text evidence="1">Belongs to the peptidase M20A family. ArgE subfamily.</text>
</comment>
<gene>
    <name evidence="1" type="primary">argE</name>
    <name type="ordered locus">SbBS512_E4443</name>
</gene>
<protein>
    <recommendedName>
        <fullName evidence="1">Acetylornithine deacetylase</fullName>
        <shortName evidence="1">AO</shortName>
        <shortName evidence="1">Acetylornithinase</shortName>
        <ecNumber evidence="1">3.5.1.16</ecNumber>
    </recommendedName>
    <alternativeName>
        <fullName evidence="1">N-acetylornithinase</fullName>
        <shortName evidence="1">NAO</shortName>
    </alternativeName>
</protein>
<evidence type="ECO:0000255" key="1">
    <source>
        <dbReference type="HAMAP-Rule" id="MF_01108"/>
    </source>
</evidence>
<feature type="chain" id="PRO_1000137081" description="Acetylornithine deacetylase">
    <location>
        <begin position="1"/>
        <end position="383"/>
    </location>
</feature>
<feature type="active site" evidence="1">
    <location>
        <position position="82"/>
    </location>
</feature>
<feature type="active site" evidence="1">
    <location>
        <position position="144"/>
    </location>
</feature>
<feature type="binding site" evidence="1">
    <location>
        <position position="80"/>
    </location>
    <ligand>
        <name>Zn(2+)</name>
        <dbReference type="ChEBI" id="CHEBI:29105"/>
        <label>1</label>
    </ligand>
</feature>
<feature type="binding site" evidence="1">
    <location>
        <position position="112"/>
    </location>
    <ligand>
        <name>Zn(2+)</name>
        <dbReference type="ChEBI" id="CHEBI:29105"/>
        <label>1</label>
    </ligand>
</feature>
<feature type="binding site" evidence="1">
    <location>
        <position position="112"/>
    </location>
    <ligand>
        <name>Zn(2+)</name>
        <dbReference type="ChEBI" id="CHEBI:29105"/>
        <label>2</label>
    </ligand>
</feature>
<feature type="binding site" evidence="1">
    <location>
        <position position="145"/>
    </location>
    <ligand>
        <name>Zn(2+)</name>
        <dbReference type="ChEBI" id="CHEBI:29105"/>
        <label>2</label>
    </ligand>
</feature>
<feature type="binding site" evidence="1">
    <location>
        <position position="169"/>
    </location>
    <ligand>
        <name>Zn(2+)</name>
        <dbReference type="ChEBI" id="CHEBI:29105"/>
        <label>1</label>
    </ligand>
</feature>
<feature type="binding site" evidence="1">
    <location>
        <position position="355"/>
    </location>
    <ligand>
        <name>Zn(2+)</name>
        <dbReference type="ChEBI" id="CHEBI:29105"/>
        <label>2</label>
    </ligand>
</feature>
<sequence>MKNKLPPFIEIYRALIATPSISATEEALDQSNADLITLLADWFKDLGFNVEVQPVPGTRNKFNMLASIGQGAGGLLLAGHTDTVPFDDGRWTRDPFTLTEHDGKLYGLGTADMKGFFAFILDALRDVDVTKLKKPLYILATADEETSMAGARYFAETTALRPDCAIIGEPTSLQPVRAHKGHISNAIRIQGQSGHSSDPARGVNAIELMHDAIGHILQLRDNLKERYHYEAFTVPYPTLNLGHIHGGDASNRICACCELHMDIRPLPGMTFNELNGLLNDALAPVSERWPGRLTVDELHPPIPGYECPPNHQLVEVVEKLLGAKTEVVNYCTEAPFIQTLCPTLVLGPGSINQAHQPDEYLETRFIKPTRELIIQVIHHFCWH</sequence>
<keyword id="KW-0028">Amino-acid biosynthesis</keyword>
<keyword id="KW-0055">Arginine biosynthesis</keyword>
<keyword id="KW-0170">Cobalt</keyword>
<keyword id="KW-0963">Cytoplasm</keyword>
<keyword id="KW-0378">Hydrolase</keyword>
<keyword id="KW-0479">Metal-binding</keyword>
<keyword id="KW-1185">Reference proteome</keyword>
<keyword id="KW-0862">Zinc</keyword>
<organism>
    <name type="scientific">Shigella boydii serotype 18 (strain CDC 3083-94 / BS512)</name>
    <dbReference type="NCBI Taxonomy" id="344609"/>
    <lineage>
        <taxon>Bacteria</taxon>
        <taxon>Pseudomonadati</taxon>
        <taxon>Pseudomonadota</taxon>
        <taxon>Gammaproteobacteria</taxon>
        <taxon>Enterobacterales</taxon>
        <taxon>Enterobacteriaceae</taxon>
        <taxon>Shigella</taxon>
    </lineage>
</organism>
<accession>B2TWF2</accession>
<reference key="1">
    <citation type="submission" date="2008-05" db="EMBL/GenBank/DDBJ databases">
        <title>Complete sequence of Shigella boydii serotype 18 strain BS512.</title>
        <authorList>
            <person name="Rasko D.A."/>
            <person name="Rosovitz M."/>
            <person name="Maurelli A.T."/>
            <person name="Myers G."/>
            <person name="Seshadri R."/>
            <person name="Cer R."/>
            <person name="Jiang L."/>
            <person name="Ravel J."/>
            <person name="Sebastian Y."/>
        </authorList>
    </citation>
    <scope>NUCLEOTIDE SEQUENCE [LARGE SCALE GENOMIC DNA]</scope>
    <source>
        <strain>CDC 3083-94 / BS512</strain>
    </source>
</reference>
<dbReference type="EC" id="3.5.1.16" evidence="1"/>
<dbReference type="EMBL" id="CP001063">
    <property type="protein sequence ID" value="ACD09186.1"/>
    <property type="molecule type" value="Genomic_DNA"/>
</dbReference>
<dbReference type="RefSeq" id="WP_012421546.1">
    <property type="nucleotide sequence ID" value="NC_010658.1"/>
</dbReference>
<dbReference type="SMR" id="B2TWF2"/>
<dbReference type="STRING" id="344609.SbBS512_E4443"/>
<dbReference type="MEROPS" id="M20.974"/>
<dbReference type="KEGG" id="sbc:SbBS512_E4443"/>
<dbReference type="HOGENOM" id="CLU_021802_2_4_6"/>
<dbReference type="UniPathway" id="UPA00068">
    <property type="reaction ID" value="UER00110"/>
</dbReference>
<dbReference type="Proteomes" id="UP000001030">
    <property type="component" value="Chromosome"/>
</dbReference>
<dbReference type="GO" id="GO:0005737">
    <property type="term" value="C:cytoplasm"/>
    <property type="evidence" value="ECO:0007669"/>
    <property type="project" value="UniProtKB-SubCell"/>
</dbReference>
<dbReference type="GO" id="GO:0008777">
    <property type="term" value="F:acetylornithine deacetylase activity"/>
    <property type="evidence" value="ECO:0007669"/>
    <property type="project" value="UniProtKB-UniRule"/>
</dbReference>
<dbReference type="GO" id="GO:0008270">
    <property type="term" value="F:zinc ion binding"/>
    <property type="evidence" value="ECO:0007669"/>
    <property type="project" value="UniProtKB-UniRule"/>
</dbReference>
<dbReference type="GO" id="GO:0006526">
    <property type="term" value="P:L-arginine biosynthetic process"/>
    <property type="evidence" value="ECO:0007669"/>
    <property type="project" value="UniProtKB-UniRule"/>
</dbReference>
<dbReference type="CDD" id="cd03894">
    <property type="entry name" value="M20_ArgE"/>
    <property type="match status" value="1"/>
</dbReference>
<dbReference type="FunFam" id="3.30.70.360:FF:000003">
    <property type="entry name" value="Acetylornithine deacetylase"/>
    <property type="match status" value="1"/>
</dbReference>
<dbReference type="Gene3D" id="3.30.70.360">
    <property type="match status" value="1"/>
</dbReference>
<dbReference type="Gene3D" id="3.40.630.10">
    <property type="entry name" value="Zn peptidases"/>
    <property type="match status" value="1"/>
</dbReference>
<dbReference type="HAMAP" id="MF_01108">
    <property type="entry name" value="ArgE"/>
    <property type="match status" value="1"/>
</dbReference>
<dbReference type="InterPro" id="IPR010169">
    <property type="entry name" value="AcOrn-deacetyl"/>
</dbReference>
<dbReference type="InterPro" id="IPR001261">
    <property type="entry name" value="ArgE/DapE_CS"/>
</dbReference>
<dbReference type="InterPro" id="IPR036264">
    <property type="entry name" value="Bact_exopeptidase_dim_dom"/>
</dbReference>
<dbReference type="InterPro" id="IPR002933">
    <property type="entry name" value="Peptidase_M20"/>
</dbReference>
<dbReference type="InterPro" id="IPR011650">
    <property type="entry name" value="Peptidase_M20_dimer"/>
</dbReference>
<dbReference type="InterPro" id="IPR050072">
    <property type="entry name" value="Peptidase_M20A"/>
</dbReference>
<dbReference type="NCBIfam" id="TIGR01892">
    <property type="entry name" value="AcOrn-deacetyl"/>
    <property type="match status" value="1"/>
</dbReference>
<dbReference type="NCBIfam" id="NF003474">
    <property type="entry name" value="PRK05111.1"/>
    <property type="match status" value="1"/>
</dbReference>
<dbReference type="PANTHER" id="PTHR43808">
    <property type="entry name" value="ACETYLORNITHINE DEACETYLASE"/>
    <property type="match status" value="1"/>
</dbReference>
<dbReference type="PANTHER" id="PTHR43808:SF1">
    <property type="entry name" value="ACETYLORNITHINE DEACETYLASE"/>
    <property type="match status" value="1"/>
</dbReference>
<dbReference type="Pfam" id="PF07687">
    <property type="entry name" value="M20_dimer"/>
    <property type="match status" value="1"/>
</dbReference>
<dbReference type="Pfam" id="PF01546">
    <property type="entry name" value="Peptidase_M20"/>
    <property type="match status" value="1"/>
</dbReference>
<dbReference type="SUPFAM" id="SSF55031">
    <property type="entry name" value="Bacterial exopeptidase dimerisation domain"/>
    <property type="match status" value="1"/>
</dbReference>
<dbReference type="SUPFAM" id="SSF53187">
    <property type="entry name" value="Zn-dependent exopeptidases"/>
    <property type="match status" value="1"/>
</dbReference>
<dbReference type="PROSITE" id="PS00758">
    <property type="entry name" value="ARGE_DAPE_CPG2_1"/>
    <property type="match status" value="1"/>
</dbReference>
<dbReference type="PROSITE" id="PS00759">
    <property type="entry name" value="ARGE_DAPE_CPG2_2"/>
    <property type="match status" value="1"/>
</dbReference>
<name>ARGE_SHIB3</name>